<feature type="transit peptide" description="Mitochondrion" evidence="3">
    <location>
        <begin position="1"/>
        <end position="18"/>
    </location>
</feature>
<feature type="chain" id="PRO_0000310303" description="Putative 3-oxoacyl-[acyl-carrier-protein] synthase, mitochondrial">
    <location>
        <begin position="19"/>
        <end position="426"/>
    </location>
</feature>
<feature type="domain" description="Ketosynthase family 3 (KS3)" evidence="4">
    <location>
        <begin position="19"/>
        <end position="423"/>
    </location>
</feature>
<feature type="active site" description="For beta-ketoacyl synthase activity" evidence="4">
    <location>
        <position position="170"/>
    </location>
</feature>
<feature type="active site" description="For beta-ketoacyl synthase activity" evidence="4">
    <location>
        <position position="311"/>
    </location>
</feature>
<feature type="active site" description="For beta-ketoacyl synthase activity" evidence="4">
    <location>
        <position position="351"/>
    </location>
</feature>
<keyword id="KW-0012">Acyltransferase</keyword>
<keyword id="KW-0275">Fatty acid biosynthesis</keyword>
<keyword id="KW-0276">Fatty acid metabolism</keyword>
<keyword id="KW-0444">Lipid biosynthesis</keyword>
<keyword id="KW-0443">Lipid metabolism</keyword>
<keyword id="KW-0496">Mitochondrion</keyword>
<keyword id="KW-1185">Reference proteome</keyword>
<keyword id="KW-0808">Transferase</keyword>
<keyword id="KW-0809">Transit peptide</keyword>
<dbReference type="EC" id="2.3.1.41" evidence="2"/>
<dbReference type="EMBL" id="CU329671">
    <property type="protein sequence ID" value="CAA21898.1"/>
    <property type="molecule type" value="Genomic_DNA"/>
</dbReference>
<dbReference type="PIR" id="T40738">
    <property type="entry name" value="T40738"/>
</dbReference>
<dbReference type="SMR" id="O94297"/>
<dbReference type="FunCoup" id="O94297">
    <property type="interactions" value="398"/>
</dbReference>
<dbReference type="STRING" id="284812.O94297"/>
<dbReference type="PaxDb" id="4896-SPBC887.13c.1"/>
<dbReference type="EnsemblFungi" id="SPBC887.13c.1">
    <property type="protein sequence ID" value="SPBC887.13c.1:pep"/>
    <property type="gene ID" value="SPBC887.13c"/>
</dbReference>
<dbReference type="KEGG" id="spo:2541226"/>
<dbReference type="PomBase" id="SPBC887.13c"/>
<dbReference type="VEuPathDB" id="FungiDB:SPBC887.13c"/>
<dbReference type="eggNOG" id="KOG1394">
    <property type="taxonomic scope" value="Eukaryota"/>
</dbReference>
<dbReference type="HOGENOM" id="CLU_000022_69_2_1"/>
<dbReference type="InParanoid" id="O94297"/>
<dbReference type="OMA" id="QIGHCLG"/>
<dbReference type="PhylomeDB" id="O94297"/>
<dbReference type="Reactome" id="R-SPO-9837999">
    <property type="pathway name" value="Mitochondrial protein degradation"/>
</dbReference>
<dbReference type="UniPathway" id="UPA00094"/>
<dbReference type="PRO" id="PR:O94297"/>
<dbReference type="Proteomes" id="UP000002485">
    <property type="component" value="Chromosome II"/>
</dbReference>
<dbReference type="GO" id="GO:0005739">
    <property type="term" value="C:mitochondrion"/>
    <property type="evidence" value="ECO:0007005"/>
    <property type="project" value="PomBase"/>
</dbReference>
<dbReference type="GO" id="GO:0004315">
    <property type="term" value="F:3-oxoacyl-[acyl-carrier-protein] synthase activity"/>
    <property type="evidence" value="ECO:0000318"/>
    <property type="project" value="GO_Central"/>
</dbReference>
<dbReference type="GO" id="GO:0006633">
    <property type="term" value="P:fatty acid biosynthetic process"/>
    <property type="evidence" value="ECO:0000318"/>
    <property type="project" value="GO_Central"/>
</dbReference>
<dbReference type="CDD" id="cd00834">
    <property type="entry name" value="KAS_I_II"/>
    <property type="match status" value="1"/>
</dbReference>
<dbReference type="FunFam" id="3.40.47.10:FF:000009">
    <property type="entry name" value="3-oxoacyl-[acyl-carrier-protein] synthase 2"/>
    <property type="match status" value="1"/>
</dbReference>
<dbReference type="Gene3D" id="3.40.47.10">
    <property type="match status" value="1"/>
</dbReference>
<dbReference type="InterPro" id="IPR017568">
    <property type="entry name" value="3-oxoacyl-ACP_synth-2"/>
</dbReference>
<dbReference type="InterPro" id="IPR000794">
    <property type="entry name" value="Beta-ketoacyl_synthase"/>
</dbReference>
<dbReference type="InterPro" id="IPR014031">
    <property type="entry name" value="Ketoacyl_synth_C"/>
</dbReference>
<dbReference type="InterPro" id="IPR014030">
    <property type="entry name" value="Ketoacyl_synth_N"/>
</dbReference>
<dbReference type="InterPro" id="IPR020841">
    <property type="entry name" value="PKS_Beta-ketoAc_synthase_dom"/>
</dbReference>
<dbReference type="InterPro" id="IPR016039">
    <property type="entry name" value="Thiolase-like"/>
</dbReference>
<dbReference type="NCBIfam" id="TIGR03150">
    <property type="entry name" value="fabF"/>
    <property type="match status" value="1"/>
</dbReference>
<dbReference type="NCBIfam" id="NF005589">
    <property type="entry name" value="PRK07314.1"/>
    <property type="match status" value="1"/>
</dbReference>
<dbReference type="PANTHER" id="PTHR11712:SF336">
    <property type="entry name" value="3-OXOACYL-[ACYL-CARRIER-PROTEIN] SYNTHASE, MITOCHONDRIAL"/>
    <property type="match status" value="1"/>
</dbReference>
<dbReference type="PANTHER" id="PTHR11712">
    <property type="entry name" value="POLYKETIDE SYNTHASE-RELATED"/>
    <property type="match status" value="1"/>
</dbReference>
<dbReference type="Pfam" id="PF00109">
    <property type="entry name" value="ketoacyl-synt"/>
    <property type="match status" value="1"/>
</dbReference>
<dbReference type="Pfam" id="PF02801">
    <property type="entry name" value="Ketoacyl-synt_C"/>
    <property type="match status" value="1"/>
</dbReference>
<dbReference type="PIRSF" id="PIRSF000447">
    <property type="entry name" value="KAS_II"/>
    <property type="match status" value="1"/>
</dbReference>
<dbReference type="SMART" id="SM00825">
    <property type="entry name" value="PKS_KS"/>
    <property type="match status" value="1"/>
</dbReference>
<dbReference type="SUPFAM" id="SSF53901">
    <property type="entry name" value="Thiolase-like"/>
    <property type="match status" value="1"/>
</dbReference>
<dbReference type="PROSITE" id="PS52004">
    <property type="entry name" value="KS3_2"/>
    <property type="match status" value="1"/>
</dbReference>
<proteinExistence type="inferred from homology"/>
<organism>
    <name type="scientific">Schizosaccharomyces pombe (strain 972 / ATCC 24843)</name>
    <name type="common">Fission yeast</name>
    <dbReference type="NCBI Taxonomy" id="284812"/>
    <lineage>
        <taxon>Eukaryota</taxon>
        <taxon>Fungi</taxon>
        <taxon>Dikarya</taxon>
        <taxon>Ascomycota</taxon>
        <taxon>Taphrinomycotina</taxon>
        <taxon>Schizosaccharomycetes</taxon>
        <taxon>Schizosaccharomycetales</taxon>
        <taxon>Schizosaccharomycetaceae</taxon>
        <taxon>Schizosaccharomyces</taxon>
    </lineage>
</organism>
<name>OXSM_SCHPO</name>
<evidence type="ECO:0000250" key="1"/>
<evidence type="ECO:0000250" key="2">
    <source>
        <dbReference type="UniProtKB" id="Q9NWU1"/>
    </source>
</evidence>
<evidence type="ECO:0000255" key="3"/>
<evidence type="ECO:0000255" key="4">
    <source>
        <dbReference type="PROSITE-ProRule" id="PRU01348"/>
    </source>
</evidence>
<evidence type="ECO:0000305" key="5"/>
<comment type="function">
    <text evidence="1">May play a role in the biosynthesis of lipoic acid as well as longer chain fatty acids required for optimal mitochondrial function.</text>
</comment>
<comment type="catalytic activity">
    <reaction evidence="2">
        <text>a fatty acyl-[ACP] + malonyl-[ACP] + H(+) = a 3-oxoacyl-[ACP] + holo-[ACP] + CO2</text>
        <dbReference type="Rhea" id="RHEA:22836"/>
        <dbReference type="Rhea" id="RHEA-COMP:9623"/>
        <dbReference type="Rhea" id="RHEA-COMP:9685"/>
        <dbReference type="Rhea" id="RHEA-COMP:9916"/>
        <dbReference type="Rhea" id="RHEA-COMP:14125"/>
        <dbReference type="ChEBI" id="CHEBI:15378"/>
        <dbReference type="ChEBI" id="CHEBI:16526"/>
        <dbReference type="ChEBI" id="CHEBI:64479"/>
        <dbReference type="ChEBI" id="CHEBI:78449"/>
        <dbReference type="ChEBI" id="CHEBI:78776"/>
        <dbReference type="ChEBI" id="CHEBI:138651"/>
        <dbReference type="EC" id="2.3.1.41"/>
    </reaction>
    <physiologicalReaction direction="left-to-right" evidence="2">
        <dbReference type="Rhea" id="RHEA:22837"/>
    </physiologicalReaction>
</comment>
<comment type="catalytic activity">
    <reaction evidence="2">
        <text>butanoyl-[ACP] + malonyl-[ACP] + H(+) = 3-oxohexanoyl-[ACP] + holo-[ACP] + CO2</text>
        <dbReference type="Rhea" id="RHEA:41820"/>
        <dbReference type="Rhea" id="RHEA-COMP:9623"/>
        <dbReference type="Rhea" id="RHEA-COMP:9628"/>
        <dbReference type="Rhea" id="RHEA-COMP:9629"/>
        <dbReference type="Rhea" id="RHEA-COMP:9685"/>
        <dbReference type="ChEBI" id="CHEBI:15378"/>
        <dbReference type="ChEBI" id="CHEBI:16526"/>
        <dbReference type="ChEBI" id="CHEBI:64479"/>
        <dbReference type="ChEBI" id="CHEBI:78449"/>
        <dbReference type="ChEBI" id="CHEBI:78454"/>
        <dbReference type="ChEBI" id="CHEBI:78456"/>
    </reaction>
    <physiologicalReaction direction="left-to-right" evidence="2">
        <dbReference type="Rhea" id="RHEA:41821"/>
    </physiologicalReaction>
</comment>
<comment type="catalytic activity">
    <reaction evidence="2">
        <text>hexanoyl-[ACP] + malonyl-[ACP] + H(+) = 3-oxooctanoyl-[ACP] + holo-[ACP] + CO2</text>
        <dbReference type="Rhea" id="RHEA:41836"/>
        <dbReference type="Rhea" id="RHEA-COMP:9623"/>
        <dbReference type="Rhea" id="RHEA-COMP:9632"/>
        <dbReference type="Rhea" id="RHEA-COMP:9633"/>
        <dbReference type="Rhea" id="RHEA-COMP:9685"/>
        <dbReference type="ChEBI" id="CHEBI:15378"/>
        <dbReference type="ChEBI" id="CHEBI:16526"/>
        <dbReference type="ChEBI" id="CHEBI:64479"/>
        <dbReference type="ChEBI" id="CHEBI:78449"/>
        <dbReference type="ChEBI" id="CHEBI:78459"/>
        <dbReference type="ChEBI" id="CHEBI:78460"/>
    </reaction>
    <physiologicalReaction direction="left-to-right" evidence="2">
        <dbReference type="Rhea" id="RHEA:41837"/>
    </physiologicalReaction>
</comment>
<comment type="catalytic activity">
    <reaction evidence="2">
        <text>octanoyl-[ACP] + malonyl-[ACP] + H(+) = 3-oxodecanoyl-[ACP] + holo-[ACP] + CO2</text>
        <dbReference type="Rhea" id="RHEA:41852"/>
        <dbReference type="Rhea" id="RHEA-COMP:9623"/>
        <dbReference type="Rhea" id="RHEA-COMP:9636"/>
        <dbReference type="Rhea" id="RHEA-COMP:9637"/>
        <dbReference type="Rhea" id="RHEA-COMP:9685"/>
        <dbReference type="ChEBI" id="CHEBI:15378"/>
        <dbReference type="ChEBI" id="CHEBI:16526"/>
        <dbReference type="ChEBI" id="CHEBI:64479"/>
        <dbReference type="ChEBI" id="CHEBI:78449"/>
        <dbReference type="ChEBI" id="CHEBI:78463"/>
        <dbReference type="ChEBI" id="CHEBI:78464"/>
    </reaction>
    <physiologicalReaction direction="left-to-right" evidence="2">
        <dbReference type="Rhea" id="RHEA:41853"/>
    </physiologicalReaction>
</comment>
<comment type="catalytic activity">
    <reaction evidence="2">
        <text>decanoyl-[ACP] + malonyl-[ACP] + H(+) = 3-oxododecanoyl-[ACP] + holo-[ACP] + CO2</text>
        <dbReference type="Rhea" id="RHEA:41868"/>
        <dbReference type="Rhea" id="RHEA-COMP:9623"/>
        <dbReference type="Rhea" id="RHEA-COMP:9640"/>
        <dbReference type="Rhea" id="RHEA-COMP:9641"/>
        <dbReference type="Rhea" id="RHEA-COMP:9685"/>
        <dbReference type="ChEBI" id="CHEBI:15378"/>
        <dbReference type="ChEBI" id="CHEBI:16526"/>
        <dbReference type="ChEBI" id="CHEBI:64479"/>
        <dbReference type="ChEBI" id="CHEBI:78449"/>
        <dbReference type="ChEBI" id="CHEBI:78468"/>
        <dbReference type="ChEBI" id="CHEBI:78469"/>
    </reaction>
    <physiologicalReaction direction="left-to-right" evidence="2">
        <dbReference type="Rhea" id="RHEA:41869"/>
    </physiologicalReaction>
</comment>
<comment type="catalytic activity">
    <reaction evidence="2">
        <text>dodecanoyl-[ACP] + malonyl-[ACP] + H(+) = 3-oxotetradecanoyl-[ACP] + holo-[ACP] + CO2</text>
        <dbReference type="Rhea" id="RHEA:41884"/>
        <dbReference type="Rhea" id="RHEA-COMP:9623"/>
        <dbReference type="Rhea" id="RHEA-COMP:9644"/>
        <dbReference type="Rhea" id="RHEA-COMP:9645"/>
        <dbReference type="Rhea" id="RHEA-COMP:9685"/>
        <dbReference type="ChEBI" id="CHEBI:15378"/>
        <dbReference type="ChEBI" id="CHEBI:16526"/>
        <dbReference type="ChEBI" id="CHEBI:64479"/>
        <dbReference type="ChEBI" id="CHEBI:65264"/>
        <dbReference type="ChEBI" id="CHEBI:78449"/>
        <dbReference type="ChEBI" id="CHEBI:78473"/>
    </reaction>
    <physiologicalReaction direction="left-to-right" evidence="2">
        <dbReference type="Rhea" id="RHEA:41885"/>
    </physiologicalReaction>
</comment>
<comment type="catalytic activity">
    <reaction evidence="2">
        <text>tetradecanoyl-[ACP] + malonyl-[ACP] + H(+) = 3-oxohexadecanoyl-[ACP] + holo-[ACP] + CO2</text>
        <dbReference type="Rhea" id="RHEA:41900"/>
        <dbReference type="Rhea" id="RHEA-COMP:9623"/>
        <dbReference type="Rhea" id="RHEA-COMP:9648"/>
        <dbReference type="Rhea" id="RHEA-COMP:9649"/>
        <dbReference type="Rhea" id="RHEA-COMP:9685"/>
        <dbReference type="ChEBI" id="CHEBI:15378"/>
        <dbReference type="ChEBI" id="CHEBI:16526"/>
        <dbReference type="ChEBI" id="CHEBI:64479"/>
        <dbReference type="ChEBI" id="CHEBI:78449"/>
        <dbReference type="ChEBI" id="CHEBI:78477"/>
        <dbReference type="ChEBI" id="CHEBI:78478"/>
    </reaction>
    <physiologicalReaction direction="left-to-right" evidence="2">
        <dbReference type="Rhea" id="RHEA:41901"/>
    </physiologicalReaction>
</comment>
<comment type="pathway">
    <text>Lipid metabolism; fatty acid biosynthesis.</text>
</comment>
<comment type="subcellular location">
    <subcellularLocation>
        <location evidence="1">Mitochondrion</location>
    </subcellularLocation>
</comment>
<comment type="similarity">
    <text evidence="5">Belongs to the thiolase-like superfamily. Beta-ketoacyl-ACP synthases family.</text>
</comment>
<protein>
    <recommendedName>
        <fullName evidence="5">Putative 3-oxoacyl-[acyl-carrier-protein] synthase, mitochondrial</fullName>
        <ecNumber evidence="2">2.3.1.41</ecNumber>
    </recommendedName>
    <alternativeName>
        <fullName>Beta-ketoacyl-ACP synthase</fullName>
    </alternativeName>
    <alternativeName>
        <fullName>mtKAS</fullName>
    </alternativeName>
</protein>
<gene>
    <name type="ORF">SPBC887.13c</name>
</gene>
<sequence length="426" mass="45489">MKRVVITGLGAVTPLGNGVKTNWRNLIQGKSGIVSLKGFPEYEQIPSKVAGVIPRGKEKEEWNVLDYVDQGKLREVATFTQLALTSAAEALKDARWIDIDEQEKLATGVCFGTGIGNLDDALNENGVLNKAGIRKVSPRVISKILINMPAGYISQRYGFTALNHTTTTACAAGCHAIGDAFNFIKLGHADVIIAGGSESCINPLTVAGFSKARSLSTKFNDNPKAASRPFDANRDGFVIGEGSAALVLEELEHAKNRNAHIYAEIVGYGLASDSYHITAPNPNGDAAYYAMKRSLKQAGLSASQLDYINAHATSTKLGDVAESIAITRLLCDVNRNPEAFPVSSSKGSIGHLLGAAGAIESVYTVLTVQKGVLPPTLNFEYSDIPQQFQCDYVPNVAKESRINVALSNSFGFGGTNASLCFKKFLQ</sequence>
<accession>O94297</accession>
<reference key="1">
    <citation type="journal article" date="2002" name="Nature">
        <title>The genome sequence of Schizosaccharomyces pombe.</title>
        <authorList>
            <person name="Wood V."/>
            <person name="Gwilliam R."/>
            <person name="Rajandream M.A."/>
            <person name="Lyne M.H."/>
            <person name="Lyne R."/>
            <person name="Stewart A."/>
            <person name="Sgouros J.G."/>
            <person name="Peat N."/>
            <person name="Hayles J."/>
            <person name="Baker S.G."/>
            <person name="Basham D."/>
            <person name="Bowman S."/>
            <person name="Brooks K."/>
            <person name="Brown D."/>
            <person name="Brown S."/>
            <person name="Chillingworth T."/>
            <person name="Churcher C.M."/>
            <person name="Collins M."/>
            <person name="Connor R."/>
            <person name="Cronin A."/>
            <person name="Davis P."/>
            <person name="Feltwell T."/>
            <person name="Fraser A."/>
            <person name="Gentles S."/>
            <person name="Goble A."/>
            <person name="Hamlin N."/>
            <person name="Harris D.E."/>
            <person name="Hidalgo J."/>
            <person name="Hodgson G."/>
            <person name="Holroyd S."/>
            <person name="Hornsby T."/>
            <person name="Howarth S."/>
            <person name="Huckle E.J."/>
            <person name="Hunt S."/>
            <person name="Jagels K."/>
            <person name="James K.D."/>
            <person name="Jones L."/>
            <person name="Jones M."/>
            <person name="Leather S."/>
            <person name="McDonald S."/>
            <person name="McLean J."/>
            <person name="Mooney P."/>
            <person name="Moule S."/>
            <person name="Mungall K.L."/>
            <person name="Murphy L.D."/>
            <person name="Niblett D."/>
            <person name="Odell C."/>
            <person name="Oliver K."/>
            <person name="O'Neil S."/>
            <person name="Pearson D."/>
            <person name="Quail M.A."/>
            <person name="Rabbinowitsch E."/>
            <person name="Rutherford K.M."/>
            <person name="Rutter S."/>
            <person name="Saunders D."/>
            <person name="Seeger K."/>
            <person name="Sharp S."/>
            <person name="Skelton J."/>
            <person name="Simmonds M.N."/>
            <person name="Squares R."/>
            <person name="Squares S."/>
            <person name="Stevens K."/>
            <person name="Taylor K."/>
            <person name="Taylor R.G."/>
            <person name="Tivey A."/>
            <person name="Walsh S.V."/>
            <person name="Warren T."/>
            <person name="Whitehead S."/>
            <person name="Woodward J.R."/>
            <person name="Volckaert G."/>
            <person name="Aert R."/>
            <person name="Robben J."/>
            <person name="Grymonprez B."/>
            <person name="Weltjens I."/>
            <person name="Vanstreels E."/>
            <person name="Rieger M."/>
            <person name="Schaefer M."/>
            <person name="Mueller-Auer S."/>
            <person name="Gabel C."/>
            <person name="Fuchs M."/>
            <person name="Duesterhoeft A."/>
            <person name="Fritzc C."/>
            <person name="Holzer E."/>
            <person name="Moestl D."/>
            <person name="Hilbert H."/>
            <person name="Borzym K."/>
            <person name="Langer I."/>
            <person name="Beck A."/>
            <person name="Lehrach H."/>
            <person name="Reinhardt R."/>
            <person name="Pohl T.M."/>
            <person name="Eger P."/>
            <person name="Zimmermann W."/>
            <person name="Wedler H."/>
            <person name="Wambutt R."/>
            <person name="Purnelle B."/>
            <person name="Goffeau A."/>
            <person name="Cadieu E."/>
            <person name="Dreano S."/>
            <person name="Gloux S."/>
            <person name="Lelaure V."/>
            <person name="Mottier S."/>
            <person name="Galibert F."/>
            <person name="Aves S.J."/>
            <person name="Xiang Z."/>
            <person name="Hunt C."/>
            <person name="Moore K."/>
            <person name="Hurst S.M."/>
            <person name="Lucas M."/>
            <person name="Rochet M."/>
            <person name="Gaillardin C."/>
            <person name="Tallada V.A."/>
            <person name="Garzon A."/>
            <person name="Thode G."/>
            <person name="Daga R.R."/>
            <person name="Cruzado L."/>
            <person name="Jimenez J."/>
            <person name="Sanchez M."/>
            <person name="del Rey F."/>
            <person name="Benito J."/>
            <person name="Dominguez A."/>
            <person name="Revuelta J.L."/>
            <person name="Moreno S."/>
            <person name="Armstrong J."/>
            <person name="Forsburg S.L."/>
            <person name="Cerutti L."/>
            <person name="Lowe T."/>
            <person name="McCombie W.R."/>
            <person name="Paulsen I."/>
            <person name="Potashkin J."/>
            <person name="Shpakovski G.V."/>
            <person name="Ussery D."/>
            <person name="Barrell B.G."/>
            <person name="Nurse P."/>
        </authorList>
    </citation>
    <scope>NUCLEOTIDE SEQUENCE [LARGE SCALE GENOMIC DNA]</scope>
    <source>
        <strain>972 / ATCC 24843</strain>
    </source>
</reference>